<protein>
    <recommendedName>
        <fullName evidence="1">Chromosomal replication initiator protein DnaA</fullName>
    </recommendedName>
</protein>
<sequence length="442" mass="49539">MDAWPRCLERLEAEFPPEDVHTWLKPLQAEDRGDSIVLYAPNAFIVDQVRERYLPRIRELLAYFVGNGDVALAVGSRPRAPEPAPAPVAVPSAPQAAPIVPFAGNLDSHYTFANFVEGRSNQLGLAAAIQAAQKPGDRAHNPLLLYGSTGLGKTHLMFAAGNALRQANPAAKVMYLRSEQFFSAMIRALQDKAMDQFKRQFQQIDALLIDDIQFFAGKDRTQEEFFHTFNALFDGRQQIILTCDRYPREVEGLEPRLKSRLAWGLSVAIDPPDFETRAAIVLAKARERGAEIPDDVAFLIAKKMRSNVRDLEGALNTLVARANFTGRSITVEFAQETLRDLLRAQQQAIGIPNIQKTVADYYGLQMKDLLSKRRTRSLARPRQVAMALAKELTEHSLPEIGDAFAGRDHTTVLHACRQIRTLMEADGKLREDWEKLIRKLSE</sequence>
<gene>
    <name evidence="1" type="primary">dnaA</name>
    <name type="ordered locus">XAC0001</name>
</gene>
<reference key="1">
    <citation type="journal article" date="2002" name="Nature">
        <title>Comparison of the genomes of two Xanthomonas pathogens with differing host specificities.</title>
        <authorList>
            <person name="da Silva A.C.R."/>
            <person name="Ferro J.A."/>
            <person name="Reinach F.C."/>
            <person name="Farah C.S."/>
            <person name="Furlan L.R."/>
            <person name="Quaggio R.B."/>
            <person name="Monteiro-Vitorello C.B."/>
            <person name="Van Sluys M.A."/>
            <person name="Almeida N.F. Jr."/>
            <person name="Alves L.M.C."/>
            <person name="do Amaral A.M."/>
            <person name="Bertolini M.C."/>
            <person name="Camargo L.E.A."/>
            <person name="Camarotte G."/>
            <person name="Cannavan F."/>
            <person name="Cardozo J."/>
            <person name="Chambergo F."/>
            <person name="Ciapina L.P."/>
            <person name="Cicarelli R.M.B."/>
            <person name="Coutinho L.L."/>
            <person name="Cursino-Santos J.R."/>
            <person name="El-Dorry H."/>
            <person name="Faria J.B."/>
            <person name="Ferreira A.J.S."/>
            <person name="Ferreira R.C.C."/>
            <person name="Ferro M.I.T."/>
            <person name="Formighieri E.F."/>
            <person name="Franco M.C."/>
            <person name="Greggio C.C."/>
            <person name="Gruber A."/>
            <person name="Katsuyama A.M."/>
            <person name="Kishi L.T."/>
            <person name="Leite R.P."/>
            <person name="Lemos E.G.M."/>
            <person name="Lemos M.V.F."/>
            <person name="Locali E.C."/>
            <person name="Machado M.A."/>
            <person name="Madeira A.M.B.N."/>
            <person name="Martinez-Rossi N.M."/>
            <person name="Martins E.C."/>
            <person name="Meidanis J."/>
            <person name="Menck C.F.M."/>
            <person name="Miyaki C.Y."/>
            <person name="Moon D.H."/>
            <person name="Moreira L.M."/>
            <person name="Novo M.T.M."/>
            <person name="Okura V.K."/>
            <person name="Oliveira M.C."/>
            <person name="Oliveira V.R."/>
            <person name="Pereira H.A."/>
            <person name="Rossi A."/>
            <person name="Sena J.A.D."/>
            <person name="Silva C."/>
            <person name="de Souza R.F."/>
            <person name="Spinola L.A.F."/>
            <person name="Takita M.A."/>
            <person name="Tamura R.E."/>
            <person name="Teixeira E.C."/>
            <person name="Tezza R.I.D."/>
            <person name="Trindade dos Santos M."/>
            <person name="Truffi D."/>
            <person name="Tsai S.M."/>
            <person name="White F.F."/>
            <person name="Setubal J.C."/>
            <person name="Kitajima J.P."/>
        </authorList>
    </citation>
    <scope>NUCLEOTIDE SEQUENCE [LARGE SCALE GENOMIC DNA]</scope>
    <source>
        <strain>306</strain>
    </source>
</reference>
<name>DNAA_XANAC</name>
<keyword id="KW-0067">ATP-binding</keyword>
<keyword id="KW-0963">Cytoplasm</keyword>
<keyword id="KW-0235">DNA replication</keyword>
<keyword id="KW-0238">DNA-binding</keyword>
<keyword id="KW-0446">Lipid-binding</keyword>
<keyword id="KW-0547">Nucleotide-binding</keyword>
<comment type="function">
    <text evidence="1">Plays an essential role in the initiation and regulation of chromosomal replication. ATP-DnaA binds to the origin of replication (oriC) to initiate formation of the DNA replication initiation complex once per cell cycle. Binds the DnaA box (a 9 base pair repeat at the origin) and separates the double-stranded (ds)DNA. Forms a right-handed helical filament on oriC DNA; dsDNA binds to the exterior of the filament while single-stranded (ss)DNA is stabiized in the filament's interior. The ATP-DnaA-oriC complex binds and stabilizes one strand of the AT-rich DNA unwinding element (DUE), permitting loading of DNA polymerase. After initiation quickly degrades to an ADP-DnaA complex that is not apt for DNA replication. Binds acidic phospholipids.</text>
</comment>
<comment type="subunit">
    <text evidence="1">Oligomerizes as a right-handed, spiral filament on DNA at oriC.</text>
</comment>
<comment type="subcellular location">
    <subcellularLocation>
        <location evidence="1">Cytoplasm</location>
    </subcellularLocation>
</comment>
<comment type="domain">
    <text evidence="1">Domain I is involved in oligomerization and binding regulators, domain II is flexibile and of varying length in different bacteria, domain III forms the AAA+ region, while domain IV binds dsDNA.</text>
</comment>
<comment type="similarity">
    <text evidence="1">Belongs to the DnaA family.</text>
</comment>
<feature type="chain" id="PRO_0000114305" description="Chromosomal replication initiator protein DnaA">
    <location>
        <begin position="1"/>
        <end position="442"/>
    </location>
</feature>
<feature type="region of interest" description="Domain I, interacts with DnaA modulators" evidence="1">
    <location>
        <begin position="1"/>
        <end position="68"/>
    </location>
</feature>
<feature type="region of interest" description="Domain II" evidence="1">
    <location>
        <begin position="68"/>
        <end position="104"/>
    </location>
</feature>
<feature type="region of interest" description="Domain III, AAA+ region" evidence="1">
    <location>
        <begin position="105"/>
        <end position="322"/>
    </location>
</feature>
<feature type="region of interest" description="Domain IV, binds dsDNA" evidence="1">
    <location>
        <begin position="323"/>
        <end position="442"/>
    </location>
</feature>
<feature type="binding site" evidence="1">
    <location>
        <position position="150"/>
    </location>
    <ligand>
        <name>ATP</name>
        <dbReference type="ChEBI" id="CHEBI:30616"/>
    </ligand>
</feature>
<feature type="binding site" evidence="1">
    <location>
        <position position="152"/>
    </location>
    <ligand>
        <name>ATP</name>
        <dbReference type="ChEBI" id="CHEBI:30616"/>
    </ligand>
</feature>
<feature type="binding site" evidence="1">
    <location>
        <position position="153"/>
    </location>
    <ligand>
        <name>ATP</name>
        <dbReference type="ChEBI" id="CHEBI:30616"/>
    </ligand>
</feature>
<feature type="binding site" evidence="1">
    <location>
        <position position="154"/>
    </location>
    <ligand>
        <name>ATP</name>
        <dbReference type="ChEBI" id="CHEBI:30616"/>
    </ligand>
</feature>
<proteinExistence type="inferred from homology"/>
<accession>Q8PRG2</accession>
<evidence type="ECO:0000255" key="1">
    <source>
        <dbReference type="HAMAP-Rule" id="MF_00377"/>
    </source>
</evidence>
<organism>
    <name type="scientific">Xanthomonas axonopodis pv. citri (strain 306)</name>
    <dbReference type="NCBI Taxonomy" id="190486"/>
    <lineage>
        <taxon>Bacteria</taxon>
        <taxon>Pseudomonadati</taxon>
        <taxon>Pseudomonadota</taxon>
        <taxon>Gammaproteobacteria</taxon>
        <taxon>Lysobacterales</taxon>
        <taxon>Lysobacteraceae</taxon>
        <taxon>Xanthomonas</taxon>
    </lineage>
</organism>
<dbReference type="EMBL" id="AE008923">
    <property type="protein sequence ID" value="AAM34893.1"/>
    <property type="molecule type" value="Genomic_DNA"/>
</dbReference>
<dbReference type="RefSeq" id="WP_011050021.1">
    <property type="nucleotide sequence ID" value="NC_003919.1"/>
</dbReference>
<dbReference type="SMR" id="Q8PRG2"/>
<dbReference type="GeneID" id="66909219"/>
<dbReference type="KEGG" id="xac:XAC0001"/>
<dbReference type="eggNOG" id="COG0593">
    <property type="taxonomic scope" value="Bacteria"/>
</dbReference>
<dbReference type="HOGENOM" id="CLU_026910_0_1_6"/>
<dbReference type="Proteomes" id="UP000000576">
    <property type="component" value="Chromosome"/>
</dbReference>
<dbReference type="GO" id="GO:0005737">
    <property type="term" value="C:cytoplasm"/>
    <property type="evidence" value="ECO:0007669"/>
    <property type="project" value="UniProtKB-SubCell"/>
</dbReference>
<dbReference type="GO" id="GO:0005886">
    <property type="term" value="C:plasma membrane"/>
    <property type="evidence" value="ECO:0007669"/>
    <property type="project" value="TreeGrafter"/>
</dbReference>
<dbReference type="GO" id="GO:0005524">
    <property type="term" value="F:ATP binding"/>
    <property type="evidence" value="ECO:0007669"/>
    <property type="project" value="UniProtKB-UniRule"/>
</dbReference>
<dbReference type="GO" id="GO:0016887">
    <property type="term" value="F:ATP hydrolysis activity"/>
    <property type="evidence" value="ECO:0007669"/>
    <property type="project" value="InterPro"/>
</dbReference>
<dbReference type="GO" id="GO:0003688">
    <property type="term" value="F:DNA replication origin binding"/>
    <property type="evidence" value="ECO:0007669"/>
    <property type="project" value="UniProtKB-UniRule"/>
</dbReference>
<dbReference type="GO" id="GO:0008289">
    <property type="term" value="F:lipid binding"/>
    <property type="evidence" value="ECO:0007669"/>
    <property type="project" value="UniProtKB-KW"/>
</dbReference>
<dbReference type="GO" id="GO:0006270">
    <property type="term" value="P:DNA replication initiation"/>
    <property type="evidence" value="ECO:0007669"/>
    <property type="project" value="UniProtKB-UniRule"/>
</dbReference>
<dbReference type="GO" id="GO:0006275">
    <property type="term" value="P:regulation of DNA replication"/>
    <property type="evidence" value="ECO:0007669"/>
    <property type="project" value="UniProtKB-UniRule"/>
</dbReference>
<dbReference type="CDD" id="cd00009">
    <property type="entry name" value="AAA"/>
    <property type="match status" value="1"/>
</dbReference>
<dbReference type="CDD" id="cd06571">
    <property type="entry name" value="Bac_DnaA_C"/>
    <property type="match status" value="1"/>
</dbReference>
<dbReference type="FunFam" id="1.10.1750.10:FF:000001">
    <property type="entry name" value="Chromosomal replication initiator protein DnaA"/>
    <property type="match status" value="1"/>
</dbReference>
<dbReference type="FunFam" id="1.10.8.60:FF:000003">
    <property type="entry name" value="Chromosomal replication initiator protein DnaA"/>
    <property type="match status" value="1"/>
</dbReference>
<dbReference type="FunFam" id="3.40.50.300:FF:000103">
    <property type="entry name" value="Chromosomal replication initiator protein DnaA"/>
    <property type="match status" value="1"/>
</dbReference>
<dbReference type="Gene3D" id="1.10.1750.10">
    <property type="match status" value="1"/>
</dbReference>
<dbReference type="Gene3D" id="1.10.8.60">
    <property type="match status" value="1"/>
</dbReference>
<dbReference type="Gene3D" id="3.30.300.180">
    <property type="match status" value="1"/>
</dbReference>
<dbReference type="Gene3D" id="3.40.50.300">
    <property type="entry name" value="P-loop containing nucleotide triphosphate hydrolases"/>
    <property type="match status" value="1"/>
</dbReference>
<dbReference type="HAMAP" id="MF_00377">
    <property type="entry name" value="DnaA_bact"/>
    <property type="match status" value="1"/>
</dbReference>
<dbReference type="InterPro" id="IPR003593">
    <property type="entry name" value="AAA+_ATPase"/>
</dbReference>
<dbReference type="InterPro" id="IPR001957">
    <property type="entry name" value="Chromosome_initiator_DnaA"/>
</dbReference>
<dbReference type="InterPro" id="IPR020591">
    <property type="entry name" value="Chromosome_initiator_DnaA-like"/>
</dbReference>
<dbReference type="InterPro" id="IPR018312">
    <property type="entry name" value="Chromosome_initiator_DnaA_CS"/>
</dbReference>
<dbReference type="InterPro" id="IPR013159">
    <property type="entry name" value="DnaA_C"/>
</dbReference>
<dbReference type="InterPro" id="IPR013317">
    <property type="entry name" value="DnaA_dom"/>
</dbReference>
<dbReference type="InterPro" id="IPR024633">
    <property type="entry name" value="DnaA_N_dom"/>
</dbReference>
<dbReference type="InterPro" id="IPR038454">
    <property type="entry name" value="DnaA_N_sf"/>
</dbReference>
<dbReference type="InterPro" id="IPR027417">
    <property type="entry name" value="P-loop_NTPase"/>
</dbReference>
<dbReference type="InterPro" id="IPR010921">
    <property type="entry name" value="Trp_repressor/repl_initiator"/>
</dbReference>
<dbReference type="NCBIfam" id="TIGR00362">
    <property type="entry name" value="DnaA"/>
    <property type="match status" value="1"/>
</dbReference>
<dbReference type="PANTHER" id="PTHR30050">
    <property type="entry name" value="CHROMOSOMAL REPLICATION INITIATOR PROTEIN DNAA"/>
    <property type="match status" value="1"/>
</dbReference>
<dbReference type="PANTHER" id="PTHR30050:SF2">
    <property type="entry name" value="CHROMOSOMAL REPLICATION INITIATOR PROTEIN DNAA"/>
    <property type="match status" value="1"/>
</dbReference>
<dbReference type="Pfam" id="PF00308">
    <property type="entry name" value="Bac_DnaA"/>
    <property type="match status" value="1"/>
</dbReference>
<dbReference type="Pfam" id="PF08299">
    <property type="entry name" value="Bac_DnaA_C"/>
    <property type="match status" value="1"/>
</dbReference>
<dbReference type="Pfam" id="PF11638">
    <property type="entry name" value="DnaA_N"/>
    <property type="match status" value="1"/>
</dbReference>
<dbReference type="PRINTS" id="PR00051">
    <property type="entry name" value="DNAA"/>
</dbReference>
<dbReference type="SMART" id="SM00382">
    <property type="entry name" value="AAA"/>
    <property type="match status" value="1"/>
</dbReference>
<dbReference type="SMART" id="SM00760">
    <property type="entry name" value="Bac_DnaA_C"/>
    <property type="match status" value="1"/>
</dbReference>
<dbReference type="SUPFAM" id="SSF52540">
    <property type="entry name" value="P-loop containing nucleoside triphosphate hydrolases"/>
    <property type="match status" value="1"/>
</dbReference>
<dbReference type="SUPFAM" id="SSF48295">
    <property type="entry name" value="TrpR-like"/>
    <property type="match status" value="1"/>
</dbReference>
<dbReference type="PROSITE" id="PS01008">
    <property type="entry name" value="DNAA"/>
    <property type="match status" value="1"/>
</dbReference>